<sequence length="199" mass="23084">MRFTVKQIAWLKVFLHLAGFLPLVWLFWAGHQGYFSADPAKDIQHFTGRMALKFLLATLLVAPLARYAKQPLLIRIRRLLGLWCFAWATLHLTSYTLLELGINNLALLGSEIINRPYLTLGMICWVILLALAATSTQAMQRKLGRRWQLLHNFVYLVAILAPIHYLWSVKIVSPQPIIYALLAVVLLACRYKKFRQWWR</sequence>
<feature type="chain" id="PRO_1000138737" description="Protein-methionine-sulfoxide reductase heme-binding subunit MsrQ">
    <location>
        <begin position="1"/>
        <end position="199"/>
    </location>
</feature>
<feature type="transmembrane region" description="Helical" evidence="1">
    <location>
        <begin position="8"/>
        <end position="28"/>
    </location>
</feature>
<feature type="transmembrane region" description="Helical" evidence="1">
    <location>
        <begin position="54"/>
        <end position="74"/>
    </location>
</feature>
<feature type="transmembrane region" description="Helical" evidence="1">
    <location>
        <begin position="82"/>
        <end position="102"/>
    </location>
</feature>
<feature type="transmembrane region" description="Helical" evidence="1">
    <location>
        <begin position="116"/>
        <end position="136"/>
    </location>
</feature>
<feature type="transmembrane region" description="Helical" evidence="1">
    <location>
        <begin position="149"/>
        <end position="169"/>
    </location>
</feature>
<feature type="transmembrane region" description="Helical" evidence="1">
    <location>
        <begin position="171"/>
        <end position="191"/>
    </location>
</feature>
<protein>
    <recommendedName>
        <fullName evidence="1">Protein-methionine-sulfoxide reductase heme-binding subunit MsrQ</fullName>
    </recommendedName>
    <alternativeName>
        <fullName evidence="1">Flavocytochrome MsrQ</fullName>
    </alternativeName>
</protein>
<gene>
    <name evidence="1" type="primary">msrQ</name>
    <name type="ordered locus">KPK_0455</name>
</gene>
<keyword id="KW-0997">Cell inner membrane</keyword>
<keyword id="KW-1003">Cell membrane</keyword>
<keyword id="KW-0249">Electron transport</keyword>
<keyword id="KW-0285">Flavoprotein</keyword>
<keyword id="KW-0288">FMN</keyword>
<keyword id="KW-0349">Heme</keyword>
<keyword id="KW-0408">Iron</keyword>
<keyword id="KW-0472">Membrane</keyword>
<keyword id="KW-0479">Metal-binding</keyword>
<keyword id="KW-0812">Transmembrane</keyword>
<keyword id="KW-1133">Transmembrane helix</keyword>
<keyword id="KW-0813">Transport</keyword>
<dbReference type="EMBL" id="CP000964">
    <property type="protein sequence ID" value="ACI11340.1"/>
    <property type="molecule type" value="Genomic_DNA"/>
</dbReference>
<dbReference type="SMR" id="B5XNE5"/>
<dbReference type="KEGG" id="kpe:KPK_0455"/>
<dbReference type="HOGENOM" id="CLU_080662_1_0_6"/>
<dbReference type="Proteomes" id="UP000001734">
    <property type="component" value="Chromosome"/>
</dbReference>
<dbReference type="GO" id="GO:0005886">
    <property type="term" value="C:plasma membrane"/>
    <property type="evidence" value="ECO:0007669"/>
    <property type="project" value="UniProtKB-SubCell"/>
</dbReference>
<dbReference type="GO" id="GO:0009055">
    <property type="term" value="F:electron transfer activity"/>
    <property type="evidence" value="ECO:0007669"/>
    <property type="project" value="UniProtKB-UniRule"/>
</dbReference>
<dbReference type="GO" id="GO:0010181">
    <property type="term" value="F:FMN binding"/>
    <property type="evidence" value="ECO:0007669"/>
    <property type="project" value="UniProtKB-UniRule"/>
</dbReference>
<dbReference type="GO" id="GO:0020037">
    <property type="term" value="F:heme binding"/>
    <property type="evidence" value="ECO:0007669"/>
    <property type="project" value="UniProtKB-UniRule"/>
</dbReference>
<dbReference type="GO" id="GO:0046872">
    <property type="term" value="F:metal ion binding"/>
    <property type="evidence" value="ECO:0007669"/>
    <property type="project" value="UniProtKB-KW"/>
</dbReference>
<dbReference type="GO" id="GO:0016679">
    <property type="term" value="F:oxidoreductase activity, acting on diphenols and related substances as donors"/>
    <property type="evidence" value="ECO:0007669"/>
    <property type="project" value="TreeGrafter"/>
</dbReference>
<dbReference type="GO" id="GO:0030091">
    <property type="term" value="P:protein repair"/>
    <property type="evidence" value="ECO:0007669"/>
    <property type="project" value="UniProtKB-UniRule"/>
</dbReference>
<dbReference type="HAMAP" id="MF_01207">
    <property type="entry name" value="MsrQ"/>
    <property type="match status" value="1"/>
</dbReference>
<dbReference type="InterPro" id="IPR013130">
    <property type="entry name" value="Fe3_Rdtase_TM_dom"/>
</dbReference>
<dbReference type="InterPro" id="IPR022837">
    <property type="entry name" value="MsrQ-like"/>
</dbReference>
<dbReference type="NCBIfam" id="NF003832">
    <property type="entry name" value="PRK05419.1-4"/>
    <property type="match status" value="1"/>
</dbReference>
<dbReference type="PANTHER" id="PTHR36964">
    <property type="entry name" value="PROTEIN-METHIONINE-SULFOXIDE REDUCTASE HEME-BINDING SUBUNIT MSRQ"/>
    <property type="match status" value="1"/>
</dbReference>
<dbReference type="PANTHER" id="PTHR36964:SF1">
    <property type="entry name" value="PROTEIN-METHIONINE-SULFOXIDE REDUCTASE HEME-BINDING SUBUNIT MSRQ"/>
    <property type="match status" value="1"/>
</dbReference>
<dbReference type="Pfam" id="PF01794">
    <property type="entry name" value="Ferric_reduct"/>
    <property type="match status" value="1"/>
</dbReference>
<accession>B5XNE5</accession>
<comment type="function">
    <text evidence="1">Part of the MsrPQ system that repairs oxidized periplasmic proteins containing methionine sulfoxide residues (Met-O), using respiratory chain electrons. Thus protects these proteins from oxidative-stress damage caused by reactive species of oxygen and chlorine generated by the host defense mechanisms. MsrPQ is essential for the maintenance of envelope integrity under bleach stress, rescuing a wide series of structurally unrelated periplasmic proteins from methionine oxidation. MsrQ provides electrons for reduction to the reductase catalytic subunit MsrP, using the quinone pool of the respiratory chain.</text>
</comment>
<comment type="cofactor">
    <cofactor evidence="1">
        <name>FMN</name>
        <dbReference type="ChEBI" id="CHEBI:58210"/>
    </cofactor>
    <text evidence="1">Binds 1 FMN per subunit.</text>
</comment>
<comment type="cofactor">
    <cofactor evidence="1">
        <name>heme b</name>
        <dbReference type="ChEBI" id="CHEBI:60344"/>
    </cofactor>
    <text evidence="1">Binds 1 heme b (iron(II)-protoporphyrin IX) group per subunit.</text>
</comment>
<comment type="subunit">
    <text evidence="1">Heterodimer of a catalytic subunit (MsrP) and a heme-binding subunit (MsrQ).</text>
</comment>
<comment type="subcellular location">
    <subcellularLocation>
        <location evidence="1">Cell inner membrane</location>
        <topology evidence="1">Multi-pass membrane protein</topology>
    </subcellularLocation>
</comment>
<comment type="similarity">
    <text evidence="1">Belongs to the MsrQ family.</text>
</comment>
<organism>
    <name type="scientific">Klebsiella pneumoniae (strain 342)</name>
    <dbReference type="NCBI Taxonomy" id="507522"/>
    <lineage>
        <taxon>Bacteria</taxon>
        <taxon>Pseudomonadati</taxon>
        <taxon>Pseudomonadota</taxon>
        <taxon>Gammaproteobacteria</taxon>
        <taxon>Enterobacterales</taxon>
        <taxon>Enterobacteriaceae</taxon>
        <taxon>Klebsiella/Raoultella group</taxon>
        <taxon>Klebsiella</taxon>
        <taxon>Klebsiella pneumoniae complex</taxon>
    </lineage>
</organism>
<evidence type="ECO:0000255" key="1">
    <source>
        <dbReference type="HAMAP-Rule" id="MF_01207"/>
    </source>
</evidence>
<reference key="1">
    <citation type="journal article" date="2008" name="PLoS Genet.">
        <title>Complete genome sequence of the N2-fixing broad host range endophyte Klebsiella pneumoniae 342 and virulence predictions verified in mice.</title>
        <authorList>
            <person name="Fouts D.E."/>
            <person name="Tyler H.L."/>
            <person name="DeBoy R.T."/>
            <person name="Daugherty S."/>
            <person name="Ren Q."/>
            <person name="Badger J.H."/>
            <person name="Durkin A.S."/>
            <person name="Huot H."/>
            <person name="Shrivastava S."/>
            <person name="Kothari S."/>
            <person name="Dodson R.J."/>
            <person name="Mohamoud Y."/>
            <person name="Khouri H."/>
            <person name="Roesch L.F.W."/>
            <person name="Krogfelt K.A."/>
            <person name="Struve C."/>
            <person name="Triplett E.W."/>
            <person name="Methe B.A."/>
        </authorList>
    </citation>
    <scope>NUCLEOTIDE SEQUENCE [LARGE SCALE GENOMIC DNA]</scope>
    <source>
        <strain>342</strain>
    </source>
</reference>
<proteinExistence type="inferred from homology"/>
<name>MSRQ_KLEP3</name>